<proteinExistence type="evidence at protein level"/>
<comment type="function">
    <text evidence="3">Urea hydrolase involved in nitrogen recycling from ureide, purine, and arginine catabolism.</text>
</comment>
<comment type="catalytic activity">
    <reaction evidence="3">
        <text>urea + 2 H2O + H(+) = hydrogencarbonate + 2 NH4(+)</text>
        <dbReference type="Rhea" id="RHEA:20557"/>
        <dbReference type="ChEBI" id="CHEBI:15377"/>
        <dbReference type="ChEBI" id="CHEBI:15378"/>
        <dbReference type="ChEBI" id="CHEBI:16199"/>
        <dbReference type="ChEBI" id="CHEBI:17544"/>
        <dbReference type="ChEBI" id="CHEBI:28938"/>
        <dbReference type="EC" id="3.5.1.5"/>
    </reaction>
    <physiologicalReaction direction="left-to-right" evidence="3">
        <dbReference type="Rhea" id="RHEA:20558"/>
    </physiologicalReaction>
</comment>
<comment type="cofactor">
    <cofactor evidence="2">
        <name>Ni(2+)</name>
        <dbReference type="ChEBI" id="CHEBI:49786"/>
    </cofactor>
    <text evidence="2">Binds 2 nickel ions per subunit.</text>
</comment>
<comment type="activity regulation">
    <text evidence="3">Requires the three urease accessory proteins URED, UREF AND UREG for its activation.</text>
</comment>
<comment type="pathway">
    <text evidence="5">Nitrogen metabolism; urea degradation; CO(2) and NH(3) from urea (urease route): step 1/1.</text>
</comment>
<comment type="subunit">
    <text evidence="1">Homohexamer. Other oligomeric forms may exist depending on pH and presence of salts.</text>
</comment>
<comment type="PTM">
    <text evidence="1">Carboxylation allows a single lysine to coordinate two nickel ions.</text>
</comment>
<comment type="disruption phenotype">
    <text evidence="3">No visible phenotype under normal growth conditions, but mutant plants cannot grow on medium with urea as the sole source of nitrogen.</text>
</comment>
<comment type="similarity">
    <text evidence="5">In the C-terminal section; belongs to the metallo-dependent hydrolases superfamily. Urease alpha subunit family.</text>
</comment>
<keyword id="KW-0378">Hydrolase</keyword>
<keyword id="KW-0479">Metal-binding</keyword>
<keyword id="KW-0533">Nickel</keyword>
<keyword id="KW-1185">Reference proteome</keyword>
<sequence length="838" mass="91024">MKLLPREIEKLELHQAGFLAQKRLARGIRLNYTEAVALIATQILEFIRDGDKSVAELMDIGRQLLGRRQVLPAVLHLLYTVQVEGTFRDGTKLVTVHEPISLENGNLELALHGSFLPVPSLDKFPEVHEGVIIPGDMKYGDGSIIINHGRKAVVLKVVNTGDRPVQVGSHYHFIEVNPLLVFDRRKALGMRLNIPAGTAVRFEPGERKSVVLVNIGGNKVIRGGNGIVDGLVDDVNWTVLMETMERRGFKHLEDIDASEGIAGEDPRFTTMISREKYANMYGPTTGDKLRLGDTNLYARIEKDYTVYGDECVFGGGKVLREGMGQGIEQAEALSLDTVITNSVIIDYSGIYKADIGIKNGHIVGIGKAGNPDTMHGVQNNMLIGNKTEVIAGEGMIVTAGAIDCHVHFICPQLVYEAVSSGITTMVGGGTGPAYGTRATTCTPSPFDMKLMLQSTDSLPLNFGFTGKGNTAKPLELRHIVEAGAMGLKLHEDWGTTPAAIDNCLAVAEEYDIQVNIHTDTLNESGFVEHTINAFRGRTIHTYHSEGAGGGHAPDIIRVCGVKNVLPSSTNPTRPYTKNTVDEHLDMLMVCHHLDKNIPEDVAFAESRIRAETIAAEDILHDMGAISIISSDSQAMGRIGEVISRTWQTADKMKAQRGAIDPNMADDDNSRIKRYIAKYTINPAIANGFADLIGSVEVKKLADLVIWQPAFFGAKPEMIIKGGNIAWANMGDANASIPTPEPVISRPMFGAFGKAGSENSVAFVSKAALRKGVKELYGLKKRVVAVSNVRQLTKLDMKLNDALPEITVDPETYVVTANGEVLTCAPADSVPLSRNYFLF</sequence>
<evidence type="ECO:0000250" key="1">
    <source>
        <dbReference type="UniProtKB" id="P07374"/>
    </source>
</evidence>
<evidence type="ECO:0000255" key="2">
    <source>
        <dbReference type="PROSITE-ProRule" id="PRU00700"/>
    </source>
</evidence>
<evidence type="ECO:0000269" key="3">
    <source>
    </source>
</evidence>
<evidence type="ECO:0000303" key="4">
    <source>
    </source>
</evidence>
<evidence type="ECO:0000305" key="5"/>
<evidence type="ECO:0000312" key="6">
    <source>
        <dbReference type="Araport" id="AT1G67550"/>
    </source>
</evidence>
<evidence type="ECO:0000312" key="7">
    <source>
        <dbReference type="EMBL" id="AAG52306.1"/>
    </source>
</evidence>
<protein>
    <recommendedName>
        <fullName evidence="4">Urease</fullName>
        <ecNumber evidence="3">3.5.1.5</ecNumber>
    </recommendedName>
    <alternativeName>
        <fullName evidence="5">Urea amidohydrolase</fullName>
    </alternativeName>
</protein>
<organism>
    <name type="scientific">Arabidopsis thaliana</name>
    <name type="common">Mouse-ear cress</name>
    <dbReference type="NCBI Taxonomy" id="3702"/>
    <lineage>
        <taxon>Eukaryota</taxon>
        <taxon>Viridiplantae</taxon>
        <taxon>Streptophyta</taxon>
        <taxon>Embryophyta</taxon>
        <taxon>Tracheophyta</taxon>
        <taxon>Spermatophyta</taxon>
        <taxon>Magnoliopsida</taxon>
        <taxon>eudicotyledons</taxon>
        <taxon>Gunneridae</taxon>
        <taxon>Pentapetalae</taxon>
        <taxon>rosids</taxon>
        <taxon>malvids</taxon>
        <taxon>Brassicales</taxon>
        <taxon>Brassicaceae</taxon>
        <taxon>Camelineae</taxon>
        <taxon>Arabidopsis</taxon>
    </lineage>
</organism>
<reference key="1">
    <citation type="journal article" date="2000" name="Nature">
        <title>Sequence and analysis of chromosome 1 of the plant Arabidopsis thaliana.</title>
        <authorList>
            <person name="Theologis A."/>
            <person name="Ecker J.R."/>
            <person name="Palm C.J."/>
            <person name="Federspiel N.A."/>
            <person name="Kaul S."/>
            <person name="White O."/>
            <person name="Alonso J."/>
            <person name="Altafi H."/>
            <person name="Araujo R."/>
            <person name="Bowman C.L."/>
            <person name="Brooks S.Y."/>
            <person name="Buehler E."/>
            <person name="Chan A."/>
            <person name="Chao Q."/>
            <person name="Chen H."/>
            <person name="Cheuk R.F."/>
            <person name="Chin C.W."/>
            <person name="Chung M.K."/>
            <person name="Conn L."/>
            <person name="Conway A.B."/>
            <person name="Conway A.R."/>
            <person name="Creasy T.H."/>
            <person name="Dewar K."/>
            <person name="Dunn P."/>
            <person name="Etgu P."/>
            <person name="Feldblyum T.V."/>
            <person name="Feng J.-D."/>
            <person name="Fong B."/>
            <person name="Fujii C.Y."/>
            <person name="Gill J.E."/>
            <person name="Goldsmith A.D."/>
            <person name="Haas B."/>
            <person name="Hansen N.F."/>
            <person name="Hughes B."/>
            <person name="Huizar L."/>
            <person name="Hunter J.L."/>
            <person name="Jenkins J."/>
            <person name="Johnson-Hopson C."/>
            <person name="Khan S."/>
            <person name="Khaykin E."/>
            <person name="Kim C.J."/>
            <person name="Koo H.L."/>
            <person name="Kremenetskaia I."/>
            <person name="Kurtz D.B."/>
            <person name="Kwan A."/>
            <person name="Lam B."/>
            <person name="Langin-Hooper S."/>
            <person name="Lee A."/>
            <person name="Lee J.M."/>
            <person name="Lenz C.A."/>
            <person name="Li J.H."/>
            <person name="Li Y.-P."/>
            <person name="Lin X."/>
            <person name="Liu S.X."/>
            <person name="Liu Z.A."/>
            <person name="Luros J.S."/>
            <person name="Maiti R."/>
            <person name="Marziali A."/>
            <person name="Militscher J."/>
            <person name="Miranda M."/>
            <person name="Nguyen M."/>
            <person name="Nierman W.C."/>
            <person name="Osborne B.I."/>
            <person name="Pai G."/>
            <person name="Peterson J."/>
            <person name="Pham P.K."/>
            <person name="Rizzo M."/>
            <person name="Rooney T."/>
            <person name="Rowley D."/>
            <person name="Sakano H."/>
            <person name="Salzberg S.L."/>
            <person name="Schwartz J.R."/>
            <person name="Shinn P."/>
            <person name="Southwick A.M."/>
            <person name="Sun H."/>
            <person name="Tallon L.J."/>
            <person name="Tambunga G."/>
            <person name="Toriumi M.J."/>
            <person name="Town C.D."/>
            <person name="Utterback T."/>
            <person name="Van Aken S."/>
            <person name="Vaysberg M."/>
            <person name="Vysotskaia V.S."/>
            <person name="Walker M."/>
            <person name="Wu D."/>
            <person name="Yu G."/>
            <person name="Fraser C.M."/>
            <person name="Venter J.C."/>
            <person name="Davis R.W."/>
        </authorList>
    </citation>
    <scope>NUCLEOTIDE SEQUENCE [LARGE SCALE GENOMIC DNA]</scope>
    <source>
        <strain>cv. Columbia</strain>
    </source>
</reference>
<reference key="2">
    <citation type="journal article" date="2017" name="Plant J.">
        <title>Araport11: a complete reannotation of the Arabidopsis thaliana reference genome.</title>
        <authorList>
            <person name="Cheng C.Y."/>
            <person name="Krishnakumar V."/>
            <person name="Chan A.P."/>
            <person name="Thibaud-Nissen F."/>
            <person name="Schobel S."/>
            <person name="Town C.D."/>
        </authorList>
    </citation>
    <scope>GENOME REANNOTATION</scope>
    <source>
        <strain>cv. Columbia</strain>
    </source>
</reference>
<reference key="3">
    <citation type="journal article" date="2005" name="Plant Physiol.">
        <title>Identification of three urease accessory proteins that are required for urease activation in Arabidopsis.</title>
        <authorList>
            <person name="Witte C.P."/>
            <person name="Rosso M.G."/>
            <person name="Romeis T."/>
        </authorList>
    </citation>
    <scope>FUNCTION</scope>
    <scope>CATALYTIC ACTIVITY</scope>
    <scope>ACTIVITY REGULATION</scope>
    <scope>DISRUPTION PHENOTYPE</scope>
</reference>
<accession>Q9SR52</accession>
<name>UREA_ARATH</name>
<feature type="chain" id="PRO_0000424246" description="Urease">
    <location>
        <begin position="1"/>
        <end position="838"/>
    </location>
</feature>
<feature type="domain" description="Urease" evidence="2">
    <location>
        <begin position="400"/>
        <end position="838"/>
    </location>
</feature>
<feature type="active site" description="Proton donor" evidence="2">
    <location>
        <position position="591"/>
    </location>
</feature>
<feature type="binding site" evidence="2">
    <location>
        <position position="405"/>
    </location>
    <ligand>
        <name>Ni(2+)</name>
        <dbReference type="ChEBI" id="CHEBI:49786"/>
        <label>1</label>
    </ligand>
</feature>
<feature type="binding site" evidence="2">
    <location>
        <position position="407"/>
    </location>
    <ligand>
        <name>Ni(2+)</name>
        <dbReference type="ChEBI" id="CHEBI:49786"/>
        <label>1</label>
    </ligand>
</feature>
<feature type="binding site" description="via carbamate group" evidence="2">
    <location>
        <position position="488"/>
    </location>
    <ligand>
        <name>Ni(2+)</name>
        <dbReference type="ChEBI" id="CHEBI:49786"/>
        <label>1</label>
    </ligand>
</feature>
<feature type="binding site" description="via carbamate group" evidence="2">
    <location>
        <position position="488"/>
    </location>
    <ligand>
        <name>Ni(2+)</name>
        <dbReference type="ChEBI" id="CHEBI:49786"/>
        <label>2</label>
    </ligand>
</feature>
<feature type="binding site" evidence="2">
    <location>
        <position position="490"/>
    </location>
    <ligand>
        <name>substrate</name>
    </ligand>
</feature>
<feature type="binding site" evidence="2">
    <location>
        <position position="517"/>
    </location>
    <ligand>
        <name>Ni(2+)</name>
        <dbReference type="ChEBI" id="CHEBI:49786"/>
        <label>2</label>
    </ligand>
</feature>
<feature type="binding site" evidence="2">
    <location>
        <position position="543"/>
    </location>
    <ligand>
        <name>Ni(2+)</name>
        <dbReference type="ChEBI" id="CHEBI:49786"/>
        <label>2</label>
    </ligand>
</feature>
<feature type="binding site" evidence="2">
    <location>
        <position position="631"/>
    </location>
    <ligand>
        <name>Ni(2+)</name>
        <dbReference type="ChEBI" id="CHEBI:49786"/>
        <label>1</label>
    </ligand>
</feature>
<feature type="modified residue" description="N6-carboxylysine" evidence="1">
    <location>
        <position position="488"/>
    </location>
</feature>
<gene>
    <name evidence="5" type="primary">URE</name>
    <name evidence="6" type="ordered locus">At1g67550</name>
    <name evidence="7" type="ORF">F12B7.10</name>
</gene>
<dbReference type="EC" id="3.5.1.5" evidence="3"/>
<dbReference type="EMBL" id="AC011020">
    <property type="protein sequence ID" value="AAG52306.1"/>
    <property type="molecule type" value="Genomic_DNA"/>
</dbReference>
<dbReference type="EMBL" id="CP002684">
    <property type="protein sequence ID" value="AEE34663.1"/>
    <property type="molecule type" value="Genomic_DNA"/>
</dbReference>
<dbReference type="PIR" id="A96699">
    <property type="entry name" value="A96699"/>
</dbReference>
<dbReference type="RefSeq" id="NP_176922.1">
    <property type="nucleotide sequence ID" value="NM_105422.4"/>
</dbReference>
<dbReference type="SMR" id="Q9SR52"/>
<dbReference type="ComplexPortal" id="CPX-1296">
    <property type="entry name" value="Urease activation complex"/>
</dbReference>
<dbReference type="FunCoup" id="Q9SR52">
    <property type="interactions" value="477"/>
</dbReference>
<dbReference type="STRING" id="3702.Q9SR52"/>
<dbReference type="MEROPS" id="M38.982"/>
<dbReference type="iPTMnet" id="Q9SR52"/>
<dbReference type="PaxDb" id="3702-AT1G67550.1"/>
<dbReference type="ProteomicsDB" id="228661"/>
<dbReference type="EnsemblPlants" id="AT1G67550.1">
    <property type="protein sequence ID" value="AT1G67550.1"/>
    <property type="gene ID" value="AT1G67550"/>
</dbReference>
<dbReference type="GeneID" id="843076"/>
<dbReference type="Gramene" id="AT1G67550.1">
    <property type="protein sequence ID" value="AT1G67550.1"/>
    <property type="gene ID" value="AT1G67550"/>
</dbReference>
<dbReference type="KEGG" id="ath:AT1G67550"/>
<dbReference type="Araport" id="AT1G67550"/>
<dbReference type="TAIR" id="AT1G67550">
    <property type="gene designation" value="URE"/>
</dbReference>
<dbReference type="eggNOG" id="ENOG502QPKB">
    <property type="taxonomic scope" value="Eukaryota"/>
</dbReference>
<dbReference type="HOGENOM" id="CLU_000980_0_0_1"/>
<dbReference type="InParanoid" id="Q9SR52"/>
<dbReference type="OMA" id="DTMDGVH"/>
<dbReference type="OrthoDB" id="1708534at2759"/>
<dbReference type="PhylomeDB" id="Q9SR52"/>
<dbReference type="BioCyc" id="ARA:AT1G67550-MONOMER"/>
<dbReference type="UniPathway" id="UPA00258">
    <property type="reaction ID" value="UER00370"/>
</dbReference>
<dbReference type="PRO" id="PR:Q9SR52"/>
<dbReference type="Proteomes" id="UP000006548">
    <property type="component" value="Chromosome 1"/>
</dbReference>
<dbReference type="ExpressionAtlas" id="Q9SR52">
    <property type="expression patterns" value="baseline and differential"/>
</dbReference>
<dbReference type="GO" id="GO:0005829">
    <property type="term" value="C:cytosol"/>
    <property type="evidence" value="ECO:0007005"/>
    <property type="project" value="TAIR"/>
</dbReference>
<dbReference type="GO" id="GO:0150006">
    <property type="term" value="C:urease activator complex"/>
    <property type="evidence" value="ECO:0000353"/>
    <property type="project" value="ComplexPortal"/>
</dbReference>
<dbReference type="GO" id="GO:0035550">
    <property type="term" value="C:urease complex"/>
    <property type="evidence" value="ECO:0007669"/>
    <property type="project" value="InterPro"/>
</dbReference>
<dbReference type="GO" id="GO:0016151">
    <property type="term" value="F:nickel cation binding"/>
    <property type="evidence" value="ECO:0007669"/>
    <property type="project" value="InterPro"/>
</dbReference>
<dbReference type="GO" id="GO:0009039">
    <property type="term" value="F:urease activity"/>
    <property type="evidence" value="ECO:0000314"/>
    <property type="project" value="TAIR"/>
</dbReference>
<dbReference type="GO" id="GO:0043419">
    <property type="term" value="P:urea catabolic process"/>
    <property type="evidence" value="ECO:0000314"/>
    <property type="project" value="ComplexPortal"/>
</dbReference>
<dbReference type="CDD" id="cd00375">
    <property type="entry name" value="Urease_alpha"/>
    <property type="match status" value="1"/>
</dbReference>
<dbReference type="CDD" id="cd00407">
    <property type="entry name" value="Urease_beta"/>
    <property type="match status" value="1"/>
</dbReference>
<dbReference type="CDD" id="cd00390">
    <property type="entry name" value="Urease_gamma"/>
    <property type="match status" value="1"/>
</dbReference>
<dbReference type="FunFam" id="2.10.150.10:FF:000002">
    <property type="entry name" value="Urease"/>
    <property type="match status" value="1"/>
</dbReference>
<dbReference type="FunFam" id="3.30.280.10:FF:000001">
    <property type="entry name" value="Urease subunit alpha"/>
    <property type="match status" value="1"/>
</dbReference>
<dbReference type="Gene3D" id="3.20.20.140">
    <property type="entry name" value="Metal-dependent hydrolases"/>
    <property type="match status" value="1"/>
</dbReference>
<dbReference type="Gene3D" id="2.10.150.10">
    <property type="entry name" value="Urease, beta subunit"/>
    <property type="match status" value="1"/>
</dbReference>
<dbReference type="Gene3D" id="3.30.280.10">
    <property type="entry name" value="Urease, gamma-like subunit"/>
    <property type="match status" value="1"/>
</dbReference>
<dbReference type="Gene3D" id="2.30.40.10">
    <property type="entry name" value="Urease, subunit C, domain 1"/>
    <property type="match status" value="1"/>
</dbReference>
<dbReference type="HAMAP" id="MF_01953">
    <property type="entry name" value="Urease_alpha"/>
    <property type="match status" value="1"/>
</dbReference>
<dbReference type="HAMAP" id="MF_01954">
    <property type="entry name" value="Urease_beta"/>
    <property type="match status" value="1"/>
</dbReference>
<dbReference type="InterPro" id="IPR006680">
    <property type="entry name" value="Amidohydro-rel"/>
</dbReference>
<dbReference type="InterPro" id="IPR011059">
    <property type="entry name" value="Metal-dep_hydrolase_composite"/>
</dbReference>
<dbReference type="InterPro" id="IPR032466">
    <property type="entry name" value="Metal_Hydrolase"/>
</dbReference>
<dbReference type="InterPro" id="IPR008221">
    <property type="entry name" value="Urease"/>
</dbReference>
<dbReference type="InterPro" id="IPR011612">
    <property type="entry name" value="Urease_alpha_N_dom"/>
</dbReference>
<dbReference type="InterPro" id="IPR050112">
    <property type="entry name" value="Urease_alpha_subunit"/>
</dbReference>
<dbReference type="InterPro" id="IPR017950">
    <property type="entry name" value="Urease_AS"/>
</dbReference>
<dbReference type="InterPro" id="IPR005848">
    <property type="entry name" value="Urease_asu"/>
</dbReference>
<dbReference type="InterPro" id="IPR017951">
    <property type="entry name" value="Urease_asu_c"/>
</dbReference>
<dbReference type="InterPro" id="IPR002019">
    <property type="entry name" value="Urease_beta-like"/>
</dbReference>
<dbReference type="InterPro" id="IPR036461">
    <property type="entry name" value="Urease_betasu_sf"/>
</dbReference>
<dbReference type="InterPro" id="IPR002026">
    <property type="entry name" value="Urease_gamma/gamma-beta_su"/>
</dbReference>
<dbReference type="InterPro" id="IPR036463">
    <property type="entry name" value="Urease_gamma_sf"/>
</dbReference>
<dbReference type="InterPro" id="IPR040881">
    <property type="entry name" value="Urease_linker"/>
</dbReference>
<dbReference type="InterPro" id="IPR029754">
    <property type="entry name" value="Urease_Ni-bd"/>
</dbReference>
<dbReference type="NCBIfam" id="NF009671">
    <property type="entry name" value="PRK13192.1"/>
    <property type="match status" value="1"/>
</dbReference>
<dbReference type="NCBIfam" id="NF009682">
    <property type="entry name" value="PRK13203.1"/>
    <property type="match status" value="1"/>
</dbReference>
<dbReference type="NCBIfam" id="NF009686">
    <property type="entry name" value="PRK13207.1"/>
    <property type="match status" value="1"/>
</dbReference>
<dbReference type="NCBIfam" id="TIGR01792">
    <property type="entry name" value="urease_alph"/>
    <property type="match status" value="1"/>
</dbReference>
<dbReference type="NCBIfam" id="TIGR00192">
    <property type="entry name" value="urease_beta"/>
    <property type="match status" value="1"/>
</dbReference>
<dbReference type="NCBIfam" id="TIGR00193">
    <property type="entry name" value="urease_gam"/>
    <property type="match status" value="1"/>
</dbReference>
<dbReference type="PANTHER" id="PTHR43440">
    <property type="entry name" value="UREASE"/>
    <property type="match status" value="1"/>
</dbReference>
<dbReference type="PANTHER" id="PTHR43440:SF1">
    <property type="entry name" value="UREASE"/>
    <property type="match status" value="1"/>
</dbReference>
<dbReference type="Pfam" id="PF01979">
    <property type="entry name" value="Amidohydro_1"/>
    <property type="match status" value="1"/>
</dbReference>
<dbReference type="Pfam" id="PF00449">
    <property type="entry name" value="Urease_alpha"/>
    <property type="match status" value="1"/>
</dbReference>
<dbReference type="Pfam" id="PF00699">
    <property type="entry name" value="Urease_beta"/>
    <property type="match status" value="1"/>
</dbReference>
<dbReference type="Pfam" id="PF00547">
    <property type="entry name" value="Urease_gamma"/>
    <property type="match status" value="1"/>
</dbReference>
<dbReference type="Pfam" id="PF18473">
    <property type="entry name" value="Urease_linker"/>
    <property type="match status" value="1"/>
</dbReference>
<dbReference type="PIRSF" id="PIRSF001222">
    <property type="entry name" value="Urease"/>
    <property type="match status" value="1"/>
</dbReference>
<dbReference type="PRINTS" id="PR01752">
    <property type="entry name" value="UREASE"/>
</dbReference>
<dbReference type="SUPFAM" id="SSF51338">
    <property type="entry name" value="Composite domain of metallo-dependent hydrolases"/>
    <property type="match status" value="2"/>
</dbReference>
<dbReference type="SUPFAM" id="SSF51556">
    <property type="entry name" value="Metallo-dependent hydrolases"/>
    <property type="match status" value="1"/>
</dbReference>
<dbReference type="SUPFAM" id="SSF51278">
    <property type="entry name" value="Urease, beta-subunit"/>
    <property type="match status" value="1"/>
</dbReference>
<dbReference type="SUPFAM" id="SSF54111">
    <property type="entry name" value="Urease, gamma-subunit"/>
    <property type="match status" value="1"/>
</dbReference>
<dbReference type="PROSITE" id="PS01120">
    <property type="entry name" value="UREASE_1"/>
    <property type="match status" value="1"/>
</dbReference>
<dbReference type="PROSITE" id="PS00145">
    <property type="entry name" value="UREASE_2"/>
    <property type="match status" value="1"/>
</dbReference>
<dbReference type="PROSITE" id="PS51368">
    <property type="entry name" value="UREASE_3"/>
    <property type="match status" value="1"/>
</dbReference>